<name>OSC31_ARATH</name>
<comment type="function">
    <text evidence="2 3 5 6">Acts as a hyperosmolarity-gated non-selective cation channel that permeates Ca(2+) ions (PubMed:30382938, PubMed:30190597, PubMed:38592763). Mechanosensitive ion channel that converts mechanical stimuli into a flow of ions: activated in response to membrane stretch (PubMed:30382938, PubMed:30190597, PubMed:38592763, PubMed:38570680). Not activated in response to membrane poke (PubMed:30382938, PubMed:38592763).</text>
</comment>
<comment type="subunit">
    <text evidence="2 4 5 6">Homodimer.</text>
</comment>
<comment type="subcellular location">
    <subcellularLocation>
        <location evidence="1">Membrane</location>
        <topology evidence="2 4 5 6">Multi-pass membrane protein</topology>
    </subcellularLocation>
</comment>
<comment type="similarity">
    <text evidence="9">Belongs to the CSC1 (TC 1.A.17) family.</text>
</comment>
<organism>
    <name type="scientific">Arabidopsis thaliana</name>
    <name type="common">Mouse-ear cress</name>
    <dbReference type="NCBI Taxonomy" id="3702"/>
    <lineage>
        <taxon>Eukaryota</taxon>
        <taxon>Viridiplantae</taxon>
        <taxon>Streptophyta</taxon>
        <taxon>Embryophyta</taxon>
        <taxon>Tracheophyta</taxon>
        <taxon>Spermatophyta</taxon>
        <taxon>Magnoliopsida</taxon>
        <taxon>eudicotyledons</taxon>
        <taxon>Gunneridae</taxon>
        <taxon>Pentapetalae</taxon>
        <taxon>rosids</taxon>
        <taxon>malvids</taxon>
        <taxon>Brassicales</taxon>
        <taxon>Brassicaceae</taxon>
        <taxon>Camelineae</taxon>
        <taxon>Arabidopsis</taxon>
    </lineage>
</organism>
<evidence type="ECO:0000255" key="1"/>
<evidence type="ECO:0000269" key="2">
    <source>
    </source>
</evidence>
<evidence type="ECO:0000269" key="3">
    <source>
    </source>
</evidence>
<evidence type="ECO:0000269" key="4">
    <source>
    </source>
</evidence>
<evidence type="ECO:0000269" key="5">
    <source>
    </source>
</evidence>
<evidence type="ECO:0000269" key="6">
    <source>
    </source>
</evidence>
<evidence type="ECO:0000303" key="7">
    <source>
    </source>
</evidence>
<evidence type="ECO:0000303" key="8">
    <source>
    </source>
</evidence>
<evidence type="ECO:0000305" key="9"/>
<evidence type="ECO:0000312" key="10">
    <source>
        <dbReference type="Araport" id="AT1G30360"/>
    </source>
</evidence>
<evidence type="ECO:0000312" key="11">
    <source>
        <dbReference type="EMBL" id="AAG51102.1"/>
    </source>
</evidence>
<evidence type="ECO:0007744" key="12">
    <source>
        <dbReference type="PDB" id="8GRO"/>
    </source>
</evidence>
<evidence type="ECO:0007744" key="13">
    <source>
        <dbReference type="PDB" id="8GSO"/>
    </source>
</evidence>
<evidence type="ECO:0007744" key="14">
    <source>
        <dbReference type="PDB" id="8U53"/>
    </source>
</evidence>
<evidence type="ECO:0007744" key="15">
    <source>
        <dbReference type="PDB" id="8XRY"/>
    </source>
</evidence>
<evidence type="ECO:0007744" key="16">
    <source>
        <dbReference type="PDB" id="8XS0"/>
    </source>
</evidence>
<evidence type="ECO:0007744" key="17">
    <source>
        <dbReference type="PDB" id="8XVY"/>
    </source>
</evidence>
<evidence type="ECO:0007744" key="18">
    <source>
        <dbReference type="PDB" id="8XVZ"/>
    </source>
</evidence>
<evidence type="ECO:0007744" key="19">
    <source>
        <dbReference type="PDB" id="8XW0"/>
    </source>
</evidence>
<evidence type="ECO:0007829" key="20">
    <source>
        <dbReference type="PDB" id="8GSO"/>
    </source>
</evidence>
<evidence type="ECO:0007829" key="21">
    <source>
        <dbReference type="PDB" id="8XW0"/>
    </source>
</evidence>
<accession>Q9C8G5</accession>
<accession>A0A097NUQ9</accession>
<accession>Q56WQ8</accession>
<accession>Q94B69</accession>
<accession>Q94II2</accession>
<sequence length="724" mass="81935">MEFGSFLVSLGTSFVIFVILMLLFTWLSRKSGNAPIYYPNRILKGLEPWEGTSLTRNPFAWMREALTSSEQDVVNLSGVDTAVHFVFLSTVLGIFACSSLLLLPTLLPLAATDNNIKNTKNATDTTSKGTFSQLDNLSMANITKKSSRLWAFLGAVYWISLVTYFFLWKAYKHVSSLRAQALMSADVKPEQFAILVRDMPAPPDGQTQKEFIDSYFREIYPETFYRSLVATENSKVNKIWEKLEGYKKKLARAEAILAATNNRPTNKTGFCGLVGKQVDSIEYYTELINESVAKLETEQKAVLAEKQQTAAVVFFTTRVAAASAAQSLHCQMVDKWTVTEAPEPRQLLWQNLNIKLFSRIIRQYFIYFFVAVTILFYMIPIAFVSAITTLKNLQRIIPFIKPVVEITAIRTVLESFLPQIALIVFLAMLPKLLLFLSKAEGIPSQSHAIRAASGKYFYFSVFNVFIGVTLAGTLFNTVKDIAKNPKLDMIINLLATSLPKSATFFLTYVALKFFIGYGLELSRIIPLIIFHLKKKYLCKTEAEVKEAWYPGDLSYATRVPGDMLILTITFCYSVIAPLILIFGITYFGLGWLVLRNQALKVYVPSYESYGRMWPHIHQRILAALFLFQVVMFGYLGAKTFFYTALVIPLIITSLIFGYVCRQKFYGGFEHTALEVACRELKQSPDLEEIFRAYIPHSLSSHKPEEHEFKGAMSRYQDFNAIAGV</sequence>
<keyword id="KW-0002">3D-structure</keyword>
<keyword id="KW-0106">Calcium</keyword>
<keyword id="KW-0175">Coiled coil</keyword>
<keyword id="KW-0407">Ion channel</keyword>
<keyword id="KW-0406">Ion transport</keyword>
<keyword id="KW-0472">Membrane</keyword>
<keyword id="KW-1185">Reference proteome</keyword>
<keyword id="KW-0812">Transmembrane</keyword>
<keyword id="KW-1133">Transmembrane helix</keyword>
<keyword id="KW-0813">Transport</keyword>
<protein>
    <recommendedName>
        <fullName evidence="8">Hyperosmolality-gated Ca2+ permeable channel 3.1</fullName>
        <shortName evidence="8">AtOSCA3.1</shortName>
    </recommendedName>
    <alternativeName>
        <fullName evidence="7">Protein EARLY-RESPONSIVE TO DEHYDRATION STRESS 4</fullName>
    </alternativeName>
</protein>
<feature type="chain" id="PRO_0000429811" description="Hyperosmolality-gated Ca2+ permeable channel 3.1">
    <location>
        <begin position="1"/>
        <end position="724"/>
    </location>
</feature>
<feature type="topological domain" description="Extracellular" evidence="2 4 5 6 12 13 15 16 17 18 19">
    <location>
        <begin position="1"/>
        <end position="4"/>
    </location>
</feature>
<feature type="transmembrane region" description="Helical; Name=TM0" evidence="2 4 5 6 12 13 15 16 17 18 19">
    <location>
        <begin position="5"/>
        <end position="25"/>
    </location>
</feature>
<feature type="topological domain" description="Cytoplasmic" evidence="2 4 5 6 12 13 15 16 17 18 19">
    <location>
        <begin position="26"/>
        <end position="85"/>
    </location>
</feature>
<feature type="transmembrane region" description="Helical; Name=TM1" evidence="2 4 5 6 12 13 15 16 17 18 19">
    <location>
        <begin position="86"/>
        <end position="108"/>
    </location>
</feature>
<feature type="topological domain" description="Extracellular" evidence="2 4 5 6 12 13 15 16 17 18 19">
    <location>
        <begin position="109"/>
        <end position="147"/>
    </location>
</feature>
<feature type="transmembrane region" description="Helical; Name=TM2" evidence="2 4 5 6 12 13 15 16 17 18 19">
    <location>
        <begin position="148"/>
        <end position="170"/>
    </location>
</feature>
<feature type="topological domain" description="Cytoplasmic" evidence="2 4 5 6 12 13 15 16 17 18 19">
    <location>
        <begin position="171"/>
        <end position="358"/>
    </location>
</feature>
<feature type="transmembrane region" description="Helical; Name=TM3" evidence="2 4 5 6 12 13 15 16 17 18 19">
    <location>
        <begin position="359"/>
        <end position="385"/>
    </location>
</feature>
<feature type="topological domain" description="Extracellular" evidence="2 4 5 6 12 13 15 16 17 18 19">
    <location>
        <begin position="386"/>
        <end position="411"/>
    </location>
</feature>
<feature type="transmembrane region" description="Helical; Name=TM4" evidence="2 4 5 6 12 13 15 16 17 18 19">
    <location>
        <begin position="412"/>
        <end position="439"/>
    </location>
</feature>
<feature type="topological domain" description="Cytoplasmic" evidence="2 4 6 12 13">
    <location>
        <begin position="440"/>
        <end position="448"/>
    </location>
</feature>
<feature type="transmembrane region" description="Helical; Name=TM5" evidence="2 4 5 6 12 13 15 16 17 18 19">
    <location>
        <begin position="449"/>
        <end position="472"/>
    </location>
</feature>
<feature type="topological domain" description="Extracellular" evidence="12 13">
    <location>
        <begin position="473"/>
        <end position="497"/>
    </location>
</feature>
<feature type="transmembrane region" description="Helical; Name=TM6" evidence="2 4 5 6 12 13 15 16 17 18 19">
    <location>
        <begin position="498"/>
        <end position="529"/>
    </location>
</feature>
<feature type="topological domain" description="Cytoplasmic" evidence="12 13">
    <location>
        <begin position="530"/>
        <end position="554"/>
    </location>
</feature>
<feature type="transmembrane region" description="Helical; Name=TM7" evidence="2 4 5 6 12 13 15 16 17 18 19">
    <location>
        <begin position="555"/>
        <end position="574"/>
    </location>
</feature>
<feature type="topological domain" description="Extracellular" evidence="12 13">
    <location>
        <position position="575"/>
    </location>
</feature>
<feature type="transmembrane region" description="Helical; Name=TM8" evidence="2 4 5 6 12 13 15 16 17 18 19">
    <location>
        <begin position="576"/>
        <end position="594"/>
    </location>
</feature>
<feature type="topological domain" description="Cytoplasmic" evidence="2 4 6 12 13">
    <location>
        <begin position="595"/>
        <end position="612"/>
    </location>
</feature>
<feature type="transmembrane region" description="Helical; Name=TM9" evidence="2 4 5 6 12 13 15 16 17 18 19">
    <location>
        <begin position="613"/>
        <end position="636"/>
    </location>
</feature>
<feature type="topological domain" description="Extracellular" evidence="2 4 6 12 13">
    <location>
        <begin position="637"/>
        <end position="641"/>
    </location>
</feature>
<feature type="transmembrane region" description="Helical; Name=TM10" evidence="2 4 5 6 12 13 15 16 17 18 19">
    <location>
        <begin position="642"/>
        <end position="662"/>
    </location>
</feature>
<feature type="topological domain" description="Cytoplasmic" evidence="2 4 5 6 12 13 15 16 17 18 19">
    <location>
        <begin position="663"/>
        <end position="724"/>
    </location>
</feature>
<feature type="coiled-coil region" evidence="1">
    <location>
        <begin position="241"/>
        <end position="309"/>
    </location>
</feature>
<feature type="mutagenesis site" description="In 1.1.ver mutant; promotes activation; when associated with S-454 and I-458." evidence="5">
    <original>Y</original>
    <variation>N</variation>
    <location>
        <position position="367"/>
    </location>
</feature>
<feature type="mutagenesis site" description="In 1.1.ver mutant; promotes activation; when associated with N-367 and I-458." evidence="5">
    <original>G</original>
    <variation>S</variation>
    <location>
        <position position="454"/>
    </location>
</feature>
<feature type="mutagenesis site" description="In 1.1.ver mutant; promotes activation; when associated with N-367 and S-454." evidence="5">
    <original>Y</original>
    <variation>I</variation>
    <location>
        <position position="458"/>
    </location>
</feature>
<feature type="mutagenesis site" description="Induces a closed conformation; when associated with R-619." evidence="5">
    <original>R</original>
    <variation>E</variation>
    <location>
        <position position="611"/>
    </location>
</feature>
<feature type="mutagenesis site" description="Induces a closed conformation; when associated with R-611." evidence="5">
    <original>R</original>
    <variation>E</variation>
    <location>
        <position position="619"/>
    </location>
</feature>
<feature type="sequence conflict" description="In Ref. 4; AAK68752." evidence="9" ref="4">
    <original>Y</original>
    <variation>C</variation>
    <location>
        <position position="284"/>
    </location>
</feature>
<feature type="sequence conflict" description="In Ref. 4; AAK68752." evidence="9" ref="4">
    <original>P</original>
    <variation>T</variation>
    <location>
        <position position="485"/>
    </location>
</feature>
<feature type="sequence conflict" description="In Ref. 5; BAB63915." evidence="9" ref="5">
    <original>D</original>
    <variation>V</variation>
    <location>
        <position position="685"/>
    </location>
</feature>
<feature type="helix" evidence="21">
    <location>
        <begin position="3"/>
        <end position="27"/>
    </location>
</feature>
<feature type="helix" evidence="21">
    <location>
        <begin position="31"/>
        <end position="33"/>
    </location>
</feature>
<feature type="helix" evidence="21">
    <location>
        <begin position="34"/>
        <end position="37"/>
    </location>
</feature>
<feature type="helix" evidence="21">
    <location>
        <begin position="39"/>
        <end position="42"/>
    </location>
</feature>
<feature type="turn" evidence="21">
    <location>
        <begin position="43"/>
        <end position="45"/>
    </location>
</feature>
<feature type="strand" evidence="20">
    <location>
        <begin position="48"/>
        <end position="50"/>
    </location>
</feature>
<feature type="strand" evidence="21">
    <location>
        <begin position="51"/>
        <end position="54"/>
    </location>
</feature>
<feature type="helix" evidence="21">
    <location>
        <begin position="58"/>
        <end position="60"/>
    </location>
</feature>
<feature type="helix" evidence="21">
    <location>
        <begin position="61"/>
        <end position="66"/>
    </location>
</feature>
<feature type="helix" evidence="21">
    <location>
        <begin position="70"/>
        <end position="76"/>
    </location>
</feature>
<feature type="helix" evidence="21">
    <location>
        <begin position="81"/>
        <end position="112"/>
    </location>
</feature>
<feature type="turn" evidence="21">
    <location>
        <begin position="116"/>
        <end position="118"/>
    </location>
</feature>
<feature type="helix" evidence="21">
    <location>
        <begin position="119"/>
        <end position="122"/>
    </location>
</feature>
<feature type="turn" evidence="20">
    <location>
        <begin position="124"/>
        <end position="126"/>
    </location>
</feature>
<feature type="strand" evidence="21">
    <location>
        <begin position="135"/>
        <end position="138"/>
    </location>
</feature>
<feature type="helix" evidence="21">
    <location>
        <begin position="148"/>
        <end position="183"/>
    </location>
</feature>
<feature type="helix" evidence="21">
    <location>
        <begin position="189"/>
        <end position="191"/>
    </location>
</feature>
<feature type="strand" evidence="21">
    <location>
        <begin position="192"/>
        <end position="198"/>
    </location>
</feature>
<feature type="strand" evidence="21">
    <location>
        <begin position="203"/>
        <end position="205"/>
    </location>
</feature>
<feature type="helix" evidence="21">
    <location>
        <begin position="208"/>
        <end position="212"/>
    </location>
</feature>
<feature type="turn" evidence="21">
    <location>
        <begin position="213"/>
        <end position="215"/>
    </location>
</feature>
<feature type="helix" evidence="21">
    <location>
        <begin position="216"/>
        <end position="219"/>
    </location>
</feature>
<feature type="strand" evidence="20">
    <location>
        <begin position="220"/>
        <end position="222"/>
    </location>
</feature>
<feature type="strand" evidence="21">
    <location>
        <begin position="223"/>
        <end position="229"/>
    </location>
</feature>
<feature type="helix" evidence="20">
    <location>
        <begin position="230"/>
        <end position="233"/>
    </location>
</feature>
<feature type="helix" evidence="21">
    <location>
        <begin position="234"/>
        <end position="260"/>
    </location>
</feature>
<feature type="strand" evidence="21">
    <location>
        <begin position="265"/>
        <end position="270"/>
    </location>
</feature>
<feature type="turn" evidence="21">
    <location>
        <begin position="271"/>
        <end position="273"/>
    </location>
</feature>
<feature type="strand" evidence="21">
    <location>
        <begin position="277"/>
        <end position="279"/>
    </location>
</feature>
<feature type="helix" evidence="21">
    <location>
        <begin position="280"/>
        <end position="301"/>
    </location>
</feature>
<feature type="strand" evidence="21">
    <location>
        <begin position="310"/>
        <end position="317"/>
    </location>
</feature>
<feature type="helix" evidence="21">
    <location>
        <begin position="318"/>
        <end position="323"/>
    </location>
</feature>
<feature type="turn" evidence="21">
    <location>
        <begin position="324"/>
        <end position="326"/>
    </location>
</feature>
<feature type="strand" evidence="21">
    <location>
        <begin position="330"/>
        <end position="332"/>
    </location>
</feature>
<feature type="strand" evidence="21">
    <location>
        <begin position="335"/>
        <end position="340"/>
    </location>
</feature>
<feature type="turn" evidence="21">
    <location>
        <begin position="344"/>
        <end position="346"/>
    </location>
</feature>
<feature type="turn" evidence="21">
    <location>
        <begin position="349"/>
        <end position="351"/>
    </location>
</feature>
<feature type="helix" evidence="21">
    <location>
        <begin position="356"/>
        <end position="388"/>
    </location>
</feature>
<feature type="turn" evidence="21">
    <location>
        <begin position="389"/>
        <end position="391"/>
    </location>
</feature>
<feature type="helix" evidence="21">
    <location>
        <begin position="392"/>
        <end position="394"/>
    </location>
</feature>
<feature type="helix" evidence="21">
    <location>
        <begin position="398"/>
        <end position="400"/>
    </location>
</feature>
<feature type="turn" evidence="21">
    <location>
        <begin position="401"/>
        <end position="405"/>
    </location>
</feature>
<feature type="helix" evidence="21">
    <location>
        <begin position="407"/>
        <end position="438"/>
    </location>
</feature>
<feature type="turn" evidence="21">
    <location>
        <begin position="439"/>
        <end position="441"/>
    </location>
</feature>
<feature type="helix" evidence="21">
    <location>
        <begin position="445"/>
        <end position="477"/>
    </location>
</feature>
<feature type="turn" evidence="21">
    <location>
        <begin position="478"/>
        <end position="480"/>
    </location>
</feature>
<feature type="helix" evidence="21">
    <location>
        <begin position="486"/>
        <end position="522"/>
    </location>
</feature>
<feature type="helix" evidence="21">
    <location>
        <begin position="524"/>
        <end position="529"/>
    </location>
</feature>
<feature type="turn" evidence="21">
    <location>
        <begin position="530"/>
        <end position="535"/>
    </location>
</feature>
<feature type="strand" evidence="21">
    <location>
        <begin position="536"/>
        <end position="538"/>
    </location>
</feature>
<feature type="helix" evidence="21">
    <location>
        <begin position="544"/>
        <end position="548"/>
    </location>
</feature>
<feature type="turn" evidence="21">
    <location>
        <begin position="555"/>
        <end position="557"/>
    </location>
</feature>
<feature type="helix" evidence="21">
    <location>
        <begin position="558"/>
        <end position="571"/>
    </location>
</feature>
<feature type="turn" evidence="21">
    <location>
        <begin position="572"/>
        <end position="574"/>
    </location>
</feature>
<feature type="helix" evidence="21">
    <location>
        <begin position="579"/>
        <end position="600"/>
    </location>
</feature>
<feature type="turn" evidence="21">
    <location>
        <begin position="609"/>
        <end position="612"/>
    </location>
</feature>
<feature type="helix" evidence="21">
    <location>
        <begin position="613"/>
        <end position="634"/>
    </location>
</feature>
<feature type="turn" evidence="21">
    <location>
        <begin position="635"/>
        <end position="638"/>
    </location>
</feature>
<feature type="strand" evidence="21">
    <location>
        <begin position="639"/>
        <end position="641"/>
    </location>
</feature>
<feature type="helix" evidence="21">
    <location>
        <begin position="644"/>
        <end position="646"/>
    </location>
</feature>
<feature type="helix" evidence="21">
    <location>
        <begin position="647"/>
        <end position="663"/>
    </location>
</feature>
<feature type="helix" evidence="21">
    <location>
        <begin position="666"/>
        <end position="669"/>
    </location>
</feature>
<feature type="turn" evidence="21">
    <location>
        <begin position="673"/>
        <end position="679"/>
    </location>
</feature>
<feature type="strand" evidence="21">
    <location>
        <begin position="686"/>
        <end position="689"/>
    </location>
</feature>
<feature type="helix" evidence="20">
    <location>
        <begin position="690"/>
        <end position="692"/>
    </location>
</feature>
<proteinExistence type="evidence at protein level"/>
<dbReference type="EMBL" id="KJ920369">
    <property type="protein sequence ID" value="AIU34626.1"/>
    <property type="molecule type" value="mRNA"/>
</dbReference>
<dbReference type="EMBL" id="AC025295">
    <property type="protein sequence ID" value="AAG51102.1"/>
    <property type="molecule type" value="Genomic_DNA"/>
</dbReference>
<dbReference type="EMBL" id="CP002684">
    <property type="protein sequence ID" value="AEE31209.1"/>
    <property type="molecule type" value="Genomic_DNA"/>
</dbReference>
<dbReference type="EMBL" id="AY035092">
    <property type="protein sequence ID" value="AAK59597.1"/>
    <property type="molecule type" value="mRNA"/>
</dbReference>
<dbReference type="EMBL" id="AY042812">
    <property type="protein sequence ID" value="AAK68752.1"/>
    <property type="molecule type" value="mRNA"/>
</dbReference>
<dbReference type="EMBL" id="AY063056">
    <property type="protein sequence ID" value="AAL34230.1"/>
    <property type="molecule type" value="mRNA"/>
</dbReference>
<dbReference type="EMBL" id="AB039928">
    <property type="protein sequence ID" value="BAB63915.1"/>
    <property type="molecule type" value="mRNA"/>
</dbReference>
<dbReference type="EMBL" id="AK221977">
    <property type="protein sequence ID" value="BAD94517.1"/>
    <property type="molecule type" value="mRNA"/>
</dbReference>
<dbReference type="PIR" id="H86427">
    <property type="entry name" value="H86427"/>
</dbReference>
<dbReference type="RefSeq" id="NP_564354.1">
    <property type="nucleotide sequence ID" value="NM_102773.3"/>
</dbReference>
<dbReference type="PDB" id="5Z1F">
    <property type="method" value="EM"/>
    <property type="resolution" value="4.80 A"/>
    <property type="chains" value="A/B=1-724"/>
</dbReference>
<dbReference type="PDB" id="8GRO">
    <property type="method" value="EM"/>
    <property type="resolution" value="3.50 A"/>
    <property type="chains" value="A/B=1-724"/>
</dbReference>
<dbReference type="PDB" id="8GSO">
    <property type="method" value="EM"/>
    <property type="resolution" value="3.30 A"/>
    <property type="chains" value="A/B=1-724"/>
</dbReference>
<dbReference type="PDB" id="8U53">
    <property type="method" value="EM"/>
    <property type="resolution" value="2.60 A"/>
    <property type="chains" value="A/B=1-724"/>
</dbReference>
<dbReference type="PDB" id="8XRY">
    <property type="method" value="EM"/>
    <property type="resolution" value="3.84 A"/>
    <property type="chains" value="A/B=1-724"/>
</dbReference>
<dbReference type="PDB" id="8XS0">
    <property type="method" value="EM"/>
    <property type="resolution" value="3.89 A"/>
    <property type="chains" value="A/B=1-724"/>
</dbReference>
<dbReference type="PDB" id="8XVY">
    <property type="method" value="EM"/>
    <property type="resolution" value="3.71 A"/>
    <property type="chains" value="A/B=1-724"/>
</dbReference>
<dbReference type="PDB" id="8XVZ">
    <property type="method" value="EM"/>
    <property type="resolution" value="3.78 A"/>
    <property type="chains" value="A/B=1-724"/>
</dbReference>
<dbReference type="PDB" id="8XW0">
    <property type="method" value="EM"/>
    <property type="resolution" value="3.11 A"/>
    <property type="chains" value="A/B=1-724"/>
</dbReference>
<dbReference type="PDBsum" id="5Z1F"/>
<dbReference type="PDBsum" id="8GRO"/>
<dbReference type="PDBsum" id="8GSO"/>
<dbReference type="PDBsum" id="8U53"/>
<dbReference type="PDBsum" id="8XRY"/>
<dbReference type="PDBsum" id="8XS0"/>
<dbReference type="PDBsum" id="8XVY"/>
<dbReference type="PDBsum" id="8XVZ"/>
<dbReference type="PDBsum" id="8XW0"/>
<dbReference type="EMDB" id="EMD-34210"/>
<dbReference type="EMDB" id="EMD-34237"/>
<dbReference type="EMDB" id="EMD-38611"/>
<dbReference type="EMDB" id="EMD-38612"/>
<dbReference type="EMDB" id="EMD-38723"/>
<dbReference type="EMDB" id="EMD-38724"/>
<dbReference type="EMDB" id="EMD-38725"/>
<dbReference type="EMDB" id="EMD-41911"/>
<dbReference type="EMDB" id="EMD-6875"/>
<dbReference type="SMR" id="Q9C8G5"/>
<dbReference type="BioGRID" id="25151">
    <property type="interactions" value="17"/>
</dbReference>
<dbReference type="FunCoup" id="Q9C8G5">
    <property type="interactions" value="774"/>
</dbReference>
<dbReference type="IntAct" id="Q9C8G5">
    <property type="interactions" value="13"/>
</dbReference>
<dbReference type="STRING" id="3702.Q9C8G5"/>
<dbReference type="TCDB" id="1.A.17.5.24">
    <property type="family name" value="the calcium-dependent chloride channel (ca-clc) family"/>
</dbReference>
<dbReference type="iPTMnet" id="Q9C8G5"/>
<dbReference type="SwissPalm" id="Q9C8G5"/>
<dbReference type="PaxDb" id="3702-AT1G30360.1"/>
<dbReference type="ProteomicsDB" id="220494"/>
<dbReference type="EnsemblPlants" id="AT1G30360.1">
    <property type="protein sequence ID" value="AT1G30360.1"/>
    <property type="gene ID" value="AT1G30360"/>
</dbReference>
<dbReference type="GeneID" id="839916"/>
<dbReference type="Gramene" id="AT1G30360.1">
    <property type="protein sequence ID" value="AT1G30360.1"/>
    <property type="gene ID" value="AT1G30360"/>
</dbReference>
<dbReference type="KEGG" id="ath:AT1G30360"/>
<dbReference type="Araport" id="AT1G30360"/>
<dbReference type="TAIR" id="AT1G30360">
    <property type="gene designation" value="ERD4"/>
</dbReference>
<dbReference type="eggNOG" id="KOG1134">
    <property type="taxonomic scope" value="Eukaryota"/>
</dbReference>
<dbReference type="HOGENOM" id="CLU_002458_7_1_1"/>
<dbReference type="InParanoid" id="Q9C8G5"/>
<dbReference type="OMA" id="CSCKKEN"/>
<dbReference type="OrthoDB" id="1689567at2759"/>
<dbReference type="PhylomeDB" id="Q9C8G5"/>
<dbReference type="PRO" id="PR:Q9C8G5"/>
<dbReference type="Proteomes" id="UP000006548">
    <property type="component" value="Chromosome 1"/>
</dbReference>
<dbReference type="ExpressionAtlas" id="Q9C8G5">
    <property type="expression patterns" value="baseline and differential"/>
</dbReference>
<dbReference type="GO" id="GO:0009941">
    <property type="term" value="C:chloroplast envelope"/>
    <property type="evidence" value="ECO:0007005"/>
    <property type="project" value="TAIR"/>
</dbReference>
<dbReference type="GO" id="GO:0005634">
    <property type="term" value="C:nucleus"/>
    <property type="evidence" value="ECO:0007005"/>
    <property type="project" value="TAIR"/>
</dbReference>
<dbReference type="GO" id="GO:0000325">
    <property type="term" value="C:plant-type vacuole"/>
    <property type="evidence" value="ECO:0007005"/>
    <property type="project" value="TAIR"/>
</dbReference>
<dbReference type="GO" id="GO:0005886">
    <property type="term" value="C:plasma membrane"/>
    <property type="evidence" value="ECO:0007005"/>
    <property type="project" value="TAIR"/>
</dbReference>
<dbReference type="GO" id="GO:0009506">
    <property type="term" value="C:plasmodesma"/>
    <property type="evidence" value="ECO:0007005"/>
    <property type="project" value="TAIR"/>
</dbReference>
<dbReference type="GO" id="GO:0005227">
    <property type="term" value="F:calcium-activated cation channel activity"/>
    <property type="evidence" value="ECO:0007669"/>
    <property type="project" value="InterPro"/>
</dbReference>
<dbReference type="GO" id="GO:0008381">
    <property type="term" value="F:mechanosensitive monoatomic ion channel activity"/>
    <property type="evidence" value="ECO:0000314"/>
    <property type="project" value="UniProtKB"/>
</dbReference>
<dbReference type="GO" id="GO:0003729">
    <property type="term" value="F:mRNA binding"/>
    <property type="evidence" value="ECO:0000314"/>
    <property type="project" value="TAIR"/>
</dbReference>
<dbReference type="InterPro" id="IPR045122">
    <property type="entry name" value="Csc1-like"/>
</dbReference>
<dbReference type="InterPro" id="IPR003864">
    <property type="entry name" value="CSC1/OSCA1-like_7TM"/>
</dbReference>
<dbReference type="InterPro" id="IPR027815">
    <property type="entry name" value="CSC1/OSCA1-like_cyt"/>
</dbReference>
<dbReference type="InterPro" id="IPR032880">
    <property type="entry name" value="Csc1/OSCA1-like_N"/>
</dbReference>
<dbReference type="PANTHER" id="PTHR13018:SF100">
    <property type="entry name" value="CSC1-LIKE PROTEIN ERD4"/>
    <property type="match status" value="1"/>
</dbReference>
<dbReference type="PANTHER" id="PTHR13018">
    <property type="entry name" value="PROBABLE MEMBRANE PROTEIN DUF221-RELATED"/>
    <property type="match status" value="1"/>
</dbReference>
<dbReference type="Pfam" id="PF14703">
    <property type="entry name" value="PHM7_cyt"/>
    <property type="match status" value="1"/>
</dbReference>
<dbReference type="Pfam" id="PF02714">
    <property type="entry name" value="RSN1_7TM"/>
    <property type="match status" value="1"/>
</dbReference>
<dbReference type="Pfam" id="PF13967">
    <property type="entry name" value="RSN1_TM"/>
    <property type="match status" value="1"/>
</dbReference>
<gene>
    <name evidence="8" type="primary">OSCA3.1</name>
    <name evidence="7" type="synonym">ERD4</name>
    <name evidence="10" type="ordered locus">At1g30360</name>
    <name evidence="11" type="ORF">T4K22.4</name>
</gene>
<reference key="1">
    <citation type="journal article" date="2014" name="Nature">
        <title>OSCA1 mediates osmotic-stress-evoked Ca(2+) increases vital for osmosensing in Arabidopsis.</title>
        <authorList>
            <person name="Yuan F."/>
            <person name="Yang H."/>
            <person name="Xue Y."/>
            <person name="Kong D."/>
            <person name="Ye R."/>
            <person name="Li C."/>
            <person name="Zhang J."/>
            <person name="Theprungsirikul L."/>
            <person name="Shrift T."/>
            <person name="Krichilsky B."/>
            <person name="Johnson D.M."/>
            <person name="Swift G.B."/>
            <person name="He Y."/>
            <person name="Siedow J.N."/>
            <person name="Pei Z.M."/>
        </authorList>
    </citation>
    <scope>NUCLEOTIDE SEQUENCE [MRNA]</scope>
</reference>
<reference key="2">
    <citation type="journal article" date="2000" name="Nature">
        <title>Sequence and analysis of chromosome 1 of the plant Arabidopsis thaliana.</title>
        <authorList>
            <person name="Theologis A."/>
            <person name="Ecker J.R."/>
            <person name="Palm C.J."/>
            <person name="Federspiel N.A."/>
            <person name="Kaul S."/>
            <person name="White O."/>
            <person name="Alonso J."/>
            <person name="Altafi H."/>
            <person name="Araujo R."/>
            <person name="Bowman C.L."/>
            <person name="Brooks S.Y."/>
            <person name="Buehler E."/>
            <person name="Chan A."/>
            <person name="Chao Q."/>
            <person name="Chen H."/>
            <person name="Cheuk R.F."/>
            <person name="Chin C.W."/>
            <person name="Chung M.K."/>
            <person name="Conn L."/>
            <person name="Conway A.B."/>
            <person name="Conway A.R."/>
            <person name="Creasy T.H."/>
            <person name="Dewar K."/>
            <person name="Dunn P."/>
            <person name="Etgu P."/>
            <person name="Feldblyum T.V."/>
            <person name="Feng J.-D."/>
            <person name="Fong B."/>
            <person name="Fujii C.Y."/>
            <person name="Gill J.E."/>
            <person name="Goldsmith A.D."/>
            <person name="Haas B."/>
            <person name="Hansen N.F."/>
            <person name="Hughes B."/>
            <person name="Huizar L."/>
            <person name="Hunter J.L."/>
            <person name="Jenkins J."/>
            <person name="Johnson-Hopson C."/>
            <person name="Khan S."/>
            <person name="Khaykin E."/>
            <person name="Kim C.J."/>
            <person name="Koo H.L."/>
            <person name="Kremenetskaia I."/>
            <person name="Kurtz D.B."/>
            <person name="Kwan A."/>
            <person name="Lam B."/>
            <person name="Langin-Hooper S."/>
            <person name="Lee A."/>
            <person name="Lee J.M."/>
            <person name="Lenz C.A."/>
            <person name="Li J.H."/>
            <person name="Li Y.-P."/>
            <person name="Lin X."/>
            <person name="Liu S.X."/>
            <person name="Liu Z.A."/>
            <person name="Luros J.S."/>
            <person name="Maiti R."/>
            <person name="Marziali A."/>
            <person name="Militscher J."/>
            <person name="Miranda M."/>
            <person name="Nguyen M."/>
            <person name="Nierman W.C."/>
            <person name="Osborne B.I."/>
            <person name="Pai G."/>
            <person name="Peterson J."/>
            <person name="Pham P.K."/>
            <person name="Rizzo M."/>
            <person name="Rooney T."/>
            <person name="Rowley D."/>
            <person name="Sakano H."/>
            <person name="Salzberg S.L."/>
            <person name="Schwartz J.R."/>
            <person name="Shinn P."/>
            <person name="Southwick A.M."/>
            <person name="Sun H."/>
            <person name="Tallon L.J."/>
            <person name="Tambunga G."/>
            <person name="Toriumi M.J."/>
            <person name="Town C.D."/>
            <person name="Utterback T."/>
            <person name="Van Aken S."/>
            <person name="Vaysberg M."/>
            <person name="Vysotskaia V.S."/>
            <person name="Walker M."/>
            <person name="Wu D."/>
            <person name="Yu G."/>
            <person name="Fraser C.M."/>
            <person name="Venter J.C."/>
            <person name="Davis R.W."/>
        </authorList>
    </citation>
    <scope>NUCLEOTIDE SEQUENCE [LARGE SCALE GENOMIC DNA]</scope>
    <source>
        <strain>cv. Columbia</strain>
    </source>
</reference>
<reference key="3">
    <citation type="journal article" date="2017" name="Plant J.">
        <title>Araport11: a complete reannotation of the Arabidopsis thaliana reference genome.</title>
        <authorList>
            <person name="Cheng C.Y."/>
            <person name="Krishnakumar V."/>
            <person name="Chan A.P."/>
            <person name="Thibaud-Nissen F."/>
            <person name="Schobel S."/>
            <person name="Town C.D."/>
        </authorList>
    </citation>
    <scope>GENOME REANNOTATION</scope>
    <source>
        <strain>cv. Columbia</strain>
    </source>
</reference>
<reference key="4">
    <citation type="journal article" date="2003" name="Science">
        <title>Empirical analysis of transcriptional activity in the Arabidopsis genome.</title>
        <authorList>
            <person name="Yamada K."/>
            <person name="Lim J."/>
            <person name="Dale J.M."/>
            <person name="Chen H."/>
            <person name="Shinn P."/>
            <person name="Palm C.J."/>
            <person name="Southwick A.M."/>
            <person name="Wu H.C."/>
            <person name="Kim C.J."/>
            <person name="Nguyen M."/>
            <person name="Pham P.K."/>
            <person name="Cheuk R.F."/>
            <person name="Karlin-Newmann G."/>
            <person name="Liu S.X."/>
            <person name="Lam B."/>
            <person name="Sakano H."/>
            <person name="Wu T."/>
            <person name="Yu G."/>
            <person name="Miranda M."/>
            <person name="Quach H.L."/>
            <person name="Tripp M."/>
            <person name="Chang C.H."/>
            <person name="Lee J.M."/>
            <person name="Toriumi M.J."/>
            <person name="Chan M.M."/>
            <person name="Tang C.C."/>
            <person name="Onodera C.S."/>
            <person name="Deng J.M."/>
            <person name="Akiyama K."/>
            <person name="Ansari Y."/>
            <person name="Arakawa T."/>
            <person name="Banh J."/>
            <person name="Banno F."/>
            <person name="Bowser L."/>
            <person name="Brooks S.Y."/>
            <person name="Carninci P."/>
            <person name="Chao Q."/>
            <person name="Choy N."/>
            <person name="Enju A."/>
            <person name="Goldsmith A.D."/>
            <person name="Gurjal M."/>
            <person name="Hansen N.F."/>
            <person name="Hayashizaki Y."/>
            <person name="Johnson-Hopson C."/>
            <person name="Hsuan V.W."/>
            <person name="Iida K."/>
            <person name="Karnes M."/>
            <person name="Khan S."/>
            <person name="Koesema E."/>
            <person name="Ishida J."/>
            <person name="Jiang P.X."/>
            <person name="Jones T."/>
            <person name="Kawai J."/>
            <person name="Kamiya A."/>
            <person name="Meyers C."/>
            <person name="Nakajima M."/>
            <person name="Narusaka M."/>
            <person name="Seki M."/>
            <person name="Sakurai T."/>
            <person name="Satou M."/>
            <person name="Tamse R."/>
            <person name="Vaysberg M."/>
            <person name="Wallender E.K."/>
            <person name="Wong C."/>
            <person name="Yamamura Y."/>
            <person name="Yuan S."/>
            <person name="Shinozaki K."/>
            <person name="Davis R.W."/>
            <person name="Theologis A."/>
            <person name="Ecker J.R."/>
        </authorList>
    </citation>
    <scope>NUCLEOTIDE SEQUENCE [LARGE SCALE MRNA]</scope>
    <source>
        <strain>cv. Columbia</strain>
    </source>
</reference>
<reference key="5">
    <citation type="journal article" date="1994" name="Plant Mol. Biol.">
        <title>Cloning of cDNAs for genes that are early-responsive to dehydration stress (ERDs) in Arabidopsis thaliana L.: identification of three ERDs as HSP cognate genes.</title>
        <authorList>
            <person name="Kiyosue T."/>
            <person name="Yamaguchi-shinozaki K."/>
            <person name="Shinozaki K."/>
        </authorList>
    </citation>
    <scope>NUCLEOTIDE SEQUENCE [MRNA] OF 85-724</scope>
    <source>
        <strain>cv. Columbia</strain>
    </source>
</reference>
<reference key="6">
    <citation type="submission" date="2005-03" db="EMBL/GenBank/DDBJ databases">
        <title>Large-scale analysis of RIKEN Arabidopsis full-length (RAFL) cDNAs.</title>
        <authorList>
            <person name="Totoki Y."/>
            <person name="Seki M."/>
            <person name="Ishida J."/>
            <person name="Nakajima M."/>
            <person name="Enju A."/>
            <person name="Kamiya A."/>
            <person name="Narusaka M."/>
            <person name="Shin-i T."/>
            <person name="Nakagawa M."/>
            <person name="Sakamoto N."/>
            <person name="Oishi K."/>
            <person name="Kohara Y."/>
            <person name="Kobayashi M."/>
            <person name="Toyoda A."/>
            <person name="Sakaki Y."/>
            <person name="Sakurai T."/>
            <person name="Iida K."/>
            <person name="Akiyama K."/>
            <person name="Satou M."/>
            <person name="Toyoda T."/>
            <person name="Konagaya A."/>
            <person name="Carninci P."/>
            <person name="Kawai J."/>
            <person name="Hayashizaki Y."/>
            <person name="Shinozaki K."/>
        </authorList>
    </citation>
    <scope>NUCLEOTIDE SEQUENCE [LARGE SCALE MRNA] OF 522-724</scope>
    <source>
        <strain>cv. Columbia</strain>
    </source>
</reference>
<reference key="7">
    <citation type="journal article" date="2014" name="Cell Res.">
        <title>DUF221 proteins are a family of osmosensitive calcium-permeable cation channels conserved across eukaryotes.</title>
        <authorList>
            <person name="Hou C."/>
            <person name="Tian W."/>
            <person name="Kleist T."/>
            <person name="He K."/>
            <person name="Garcia V."/>
            <person name="Bai F."/>
            <person name="Hao Y."/>
            <person name="Luan S."/>
            <person name="Li L."/>
        </authorList>
    </citation>
    <scope>GENE FAMILY</scope>
</reference>
<reference key="8">
    <citation type="journal article" date="2018" name="Elife">
        <title>OSCA/TMEM63 are an Evolutionarily Conserved Family of Mechanically Activated Ion Channels.</title>
        <authorList>
            <person name="Murthy S.E."/>
            <person name="Dubin A.E."/>
            <person name="Whitwam T."/>
            <person name="Jojoa-Cruz S."/>
            <person name="Cahalan S.M."/>
            <person name="Mousavi S.A.R."/>
            <person name="Ward A.B."/>
            <person name="Patapoutian A."/>
        </authorList>
    </citation>
    <scope>FUNCTION</scope>
</reference>
<reference key="9">
    <citation type="journal article" date="2018" name="Nat. Struct. Mol. Biol.">
        <title>Structure of the mechanosensitive OSCA channels.</title>
        <authorList>
            <person name="Zhang M."/>
            <person name="Wang D."/>
            <person name="Kang Y."/>
            <person name="Wu J.X."/>
            <person name="Yao F."/>
            <person name="Pan C."/>
            <person name="Yan Z."/>
            <person name="Song C."/>
            <person name="Chen L."/>
        </authorList>
    </citation>
    <scope>STRUCTURE BY ELECTRON MICROSCOPY (4.80 ANGSTROMS)</scope>
    <scope>FUNCTION</scope>
    <scope>HOMODIMERIZATION</scope>
</reference>
<reference evidence="12 13" key="10">
    <citation type="journal article" date="2023" name="Nat. Commun.">
        <title>A mechanical-coupling mechanism in OSCA/TMEM63 channel mechanosensitivity.</title>
        <authorList>
            <person name="Zhang M."/>
            <person name="Shan Y."/>
            <person name="Cox C.D."/>
            <person name="Pei D."/>
        </authorList>
    </citation>
    <scope>STRUCTURE BY ELECTRON MICROSCOPY (3.30 ANGSTROMS)</scope>
    <scope>SUBUNIT</scope>
</reference>
<reference evidence="14" key="11">
    <citation type="journal article" date="2024" name="Elife">
        <title>Structure-guided mutagenesis of OSCAs reveals differential activation to mechanical stimuli.</title>
        <authorList>
            <person name="Jojoa-Cruz S."/>
            <person name="Dubin A.E."/>
            <person name="Lee W.H."/>
            <person name="Ward A.B."/>
        </authorList>
    </citation>
    <scope>STRUCTURE BY ELECTRON MICROSCOPY (2.60 ANGSTROMS)</scope>
    <scope>FUNCTION</scope>
    <scope>SUBUNIT</scope>
</reference>
<reference evidence="15 16 17 18 19" key="12">
    <citation type="journal article" date="2024" name="Nature">
        <title>Mechanical activation opens a lipid-lined pore in OSCA ion channels.</title>
        <authorList>
            <person name="Han Y."/>
            <person name="Zhou Z."/>
            <person name="Jin R."/>
            <person name="Dai F."/>
            <person name="Ge Y."/>
            <person name="Ju X."/>
            <person name="Ma X."/>
            <person name="He S."/>
            <person name="Yuan L."/>
            <person name="Wang Y."/>
            <person name="Yang W."/>
            <person name="Yue X."/>
            <person name="Chen Z."/>
            <person name="Sun Y."/>
            <person name="Corry B."/>
            <person name="Cox C.D."/>
            <person name="Zhang Y."/>
        </authorList>
    </citation>
    <scope>STRUCTURE BY ELECTRON MICROSCOPY (3.11 ANGSTROMS)</scope>
    <scope>FUNCTION</scope>
    <scope>SUBUNIT</scope>
    <scope>MUTAGENESIS OF TYR-367; GLY-454; TYR-458; ARG-611 AND ARG-619</scope>
</reference>